<comment type="function">
    <text evidence="1">A type II topoisomerase that negatively supercoils closed circular double-stranded (ds) DNA in an ATP-dependent manner to modulate DNA topology and maintain chromosomes in an underwound state. Negative supercoiling favors strand separation, and DNA replication, transcription, recombination and repair, all of which involve strand separation. Also able to catalyze the interconversion of other topological isomers of dsDNA rings, including catenanes and knotted rings. Type II topoisomerases break and join 2 DNA strands simultaneously in an ATP-dependent manner.</text>
</comment>
<comment type="catalytic activity">
    <reaction evidence="1">
        <text>ATP-dependent breakage, passage and rejoining of double-stranded DNA.</text>
        <dbReference type="EC" id="5.6.2.2"/>
    </reaction>
</comment>
<comment type="subunit">
    <text evidence="1">Heterotetramer, composed of two GyrA and two GyrB chains. In the heterotetramer, GyrA contains the active site tyrosine that forms a transient covalent intermediate with DNA, while GyrB binds cofactors and catalyzes ATP hydrolysis.</text>
</comment>
<comment type="subcellular location">
    <subcellularLocation>
        <location evidence="1">Cytoplasm</location>
    </subcellularLocation>
</comment>
<comment type="miscellaneous">
    <text evidence="1">Few gyrases are as efficient as E.coli at forming negative supercoils. Not all organisms have 2 type II topoisomerases; in organisms with a single type II topoisomerase this enzyme also has to decatenate newly replicated chromosomes.</text>
</comment>
<comment type="similarity">
    <text evidence="1">Belongs to the type II topoisomerase GyrA/ParC subunit family.</text>
</comment>
<reference key="1">
    <citation type="journal article" date="2000" name="Nature">
        <title>Genome sequence of the endocellular bacterial symbiont of aphids Buchnera sp. APS.</title>
        <authorList>
            <person name="Shigenobu S."/>
            <person name="Watanabe H."/>
            <person name="Hattori M."/>
            <person name="Sakaki Y."/>
            <person name="Ishikawa H."/>
        </authorList>
    </citation>
    <scope>NUCLEOTIDE SEQUENCE [LARGE SCALE GENOMIC DNA]</scope>
    <source>
        <strain>APS</strain>
    </source>
</reference>
<name>GYRA_BUCAI</name>
<proteinExistence type="inferred from homology"/>
<gene>
    <name evidence="1" type="primary">gyrA</name>
    <name type="ordered locus">BU180</name>
</gene>
<organism>
    <name type="scientific">Buchnera aphidicola subsp. Acyrthosiphon pisum (strain APS)</name>
    <name type="common">Acyrthosiphon pisum symbiotic bacterium</name>
    <dbReference type="NCBI Taxonomy" id="107806"/>
    <lineage>
        <taxon>Bacteria</taxon>
        <taxon>Pseudomonadati</taxon>
        <taxon>Pseudomonadota</taxon>
        <taxon>Gammaproteobacteria</taxon>
        <taxon>Enterobacterales</taxon>
        <taxon>Erwiniaceae</taxon>
        <taxon>Buchnera</taxon>
    </lineage>
</organism>
<evidence type="ECO:0000255" key="1">
    <source>
        <dbReference type="HAMAP-Rule" id="MF_01897"/>
    </source>
</evidence>
<evidence type="ECO:0000255" key="2">
    <source>
        <dbReference type="PROSITE-ProRule" id="PRU01384"/>
    </source>
</evidence>
<sequence>MKDPSREIIQVNIEEELKSSYLDYSMSVIVGRALPDVRDGLKPVHRRILFAMYILNNDWNKAYKKSARIVGDVIGKYHPHGDSAVYDAIVRMAQKFSLRYMLIDGQGNFGSVDGDSAAAMRYTEVRMSKIAHELLNDLEKNTVEFLPNYDGTEYIPEILPAKIPNLLINGSSGIAVGMATNIPPHNLNEVINGCLAYIDNNDITLEELIKHIPGPDFPTAAIINGKSGIEEAYRTGKGKIYIRAQNQIEKNKKNKKESIVFNEIPYQVNKSRLIEKIAELVKEKRIDGITALRDESDKDGMRIVIEIKREAIAEVILNQLYSLTQLQISFGINMVALCQGQPKTLSLKEILKNFLSHRQEIIIRRSLFELNKVRNRIHILEGLNMALININAIIEIIKNSVNSIDAKKIIIQKNWKSEKINYLAKKHEYYFSEKQAQAILDLRLHKITNLEQEKIIMEHNDLIKKTKELKEILENPKKMFEVIKSELLSIQNNFSDKRRTKITENHSDINMEDLINQEDVVVTLSHSGYVKYQPLSDYNAQRRGGKGKSAAKIKEEDFIESLVIANTHDTILCFSSRGILYWMKVYQLPESSRHARGRPIVNLLPLSPKERITAILPVHKYQDNLNIFMTTAHGIVKKSSLSQFKKPRFAGIIAINLHANDELIGVALTDGNNNIMLFTQNGKVVQFLENSVRTMGRTASGVKGIKIKKNDKVVSLIVPKNKGSILIATKNGYGKRTKISDFPIKSRATQGVISIKITKKNGKIIGAIQVIEKDQIMMITDAGTLVRIRVSEVGVLKRNTQGVILIRTSKNEKVVALQKIVDPMIEKIDL</sequence>
<protein>
    <recommendedName>
        <fullName evidence="1">DNA gyrase subunit A</fullName>
        <ecNumber evidence="1">5.6.2.2</ecNumber>
    </recommendedName>
</protein>
<accession>P57277</accession>
<dbReference type="EC" id="5.6.2.2" evidence="1"/>
<dbReference type="EMBL" id="BA000003">
    <property type="protein sequence ID" value="BAB12897.1"/>
    <property type="molecule type" value="Genomic_DNA"/>
</dbReference>
<dbReference type="RefSeq" id="NP_240011.1">
    <property type="nucleotide sequence ID" value="NC_002528.1"/>
</dbReference>
<dbReference type="RefSeq" id="WP_010895986.1">
    <property type="nucleotide sequence ID" value="NC_002528.1"/>
</dbReference>
<dbReference type="SMR" id="P57277"/>
<dbReference type="STRING" id="563178.BUAP5A_177"/>
<dbReference type="EnsemblBacteria" id="BAB12897">
    <property type="protein sequence ID" value="BAB12897"/>
    <property type="gene ID" value="BAB12897"/>
</dbReference>
<dbReference type="KEGG" id="buc:BU180"/>
<dbReference type="PATRIC" id="fig|107806.10.peg.191"/>
<dbReference type="eggNOG" id="COG0188">
    <property type="taxonomic scope" value="Bacteria"/>
</dbReference>
<dbReference type="HOGENOM" id="CLU_002977_6_1_6"/>
<dbReference type="Proteomes" id="UP000001806">
    <property type="component" value="Chromosome"/>
</dbReference>
<dbReference type="GO" id="GO:0005694">
    <property type="term" value="C:chromosome"/>
    <property type="evidence" value="ECO:0007669"/>
    <property type="project" value="InterPro"/>
</dbReference>
<dbReference type="GO" id="GO:0005737">
    <property type="term" value="C:cytoplasm"/>
    <property type="evidence" value="ECO:0007669"/>
    <property type="project" value="UniProtKB-SubCell"/>
</dbReference>
<dbReference type="GO" id="GO:0009330">
    <property type="term" value="C:DNA topoisomerase type II (double strand cut, ATP-hydrolyzing) complex"/>
    <property type="evidence" value="ECO:0007669"/>
    <property type="project" value="TreeGrafter"/>
</dbReference>
<dbReference type="GO" id="GO:0005524">
    <property type="term" value="F:ATP binding"/>
    <property type="evidence" value="ECO:0007669"/>
    <property type="project" value="UniProtKB-UniRule"/>
</dbReference>
<dbReference type="GO" id="GO:0003677">
    <property type="term" value="F:DNA binding"/>
    <property type="evidence" value="ECO:0007669"/>
    <property type="project" value="UniProtKB-UniRule"/>
</dbReference>
<dbReference type="GO" id="GO:0034335">
    <property type="term" value="F:DNA negative supercoiling activity"/>
    <property type="evidence" value="ECO:0007669"/>
    <property type="project" value="UniProtKB-ARBA"/>
</dbReference>
<dbReference type="GO" id="GO:0006265">
    <property type="term" value="P:DNA topological change"/>
    <property type="evidence" value="ECO:0007669"/>
    <property type="project" value="UniProtKB-UniRule"/>
</dbReference>
<dbReference type="GO" id="GO:0006261">
    <property type="term" value="P:DNA-templated DNA replication"/>
    <property type="evidence" value="ECO:0007669"/>
    <property type="project" value="UniProtKB-UniRule"/>
</dbReference>
<dbReference type="CDD" id="cd00187">
    <property type="entry name" value="TOP4c"/>
    <property type="match status" value="1"/>
</dbReference>
<dbReference type="FunFam" id="1.10.268.10:FF:000001">
    <property type="entry name" value="DNA gyrase subunit A"/>
    <property type="match status" value="1"/>
</dbReference>
<dbReference type="FunFam" id="2.120.10.90:FF:000002">
    <property type="entry name" value="DNA gyrase subunit A"/>
    <property type="match status" value="1"/>
</dbReference>
<dbReference type="FunFam" id="3.30.1360.40:FF:000002">
    <property type="entry name" value="DNA gyrase subunit A"/>
    <property type="match status" value="1"/>
</dbReference>
<dbReference type="FunFam" id="3.90.199.10:FF:000001">
    <property type="entry name" value="DNA gyrase subunit A"/>
    <property type="match status" value="1"/>
</dbReference>
<dbReference type="Gene3D" id="3.30.1360.40">
    <property type="match status" value="1"/>
</dbReference>
<dbReference type="Gene3D" id="2.120.10.90">
    <property type="entry name" value="DNA gyrase/topoisomerase IV, subunit A, C-terminal"/>
    <property type="match status" value="1"/>
</dbReference>
<dbReference type="Gene3D" id="3.90.199.10">
    <property type="entry name" value="Topoisomerase II, domain 5"/>
    <property type="match status" value="1"/>
</dbReference>
<dbReference type="Gene3D" id="1.10.268.10">
    <property type="entry name" value="Topoisomerase, domain 3"/>
    <property type="match status" value="1"/>
</dbReference>
<dbReference type="HAMAP" id="MF_01897">
    <property type="entry name" value="GyrA"/>
    <property type="match status" value="1"/>
</dbReference>
<dbReference type="InterPro" id="IPR005743">
    <property type="entry name" value="GyrA"/>
</dbReference>
<dbReference type="InterPro" id="IPR006691">
    <property type="entry name" value="GyrA/parC_rep"/>
</dbReference>
<dbReference type="InterPro" id="IPR035516">
    <property type="entry name" value="Gyrase/topoIV_suA_C"/>
</dbReference>
<dbReference type="InterPro" id="IPR013760">
    <property type="entry name" value="Topo_IIA-like_dom_sf"/>
</dbReference>
<dbReference type="InterPro" id="IPR013758">
    <property type="entry name" value="Topo_IIA_A/C_ab"/>
</dbReference>
<dbReference type="InterPro" id="IPR013757">
    <property type="entry name" value="Topo_IIA_A_a_sf"/>
</dbReference>
<dbReference type="InterPro" id="IPR002205">
    <property type="entry name" value="Topo_IIA_dom_A"/>
</dbReference>
<dbReference type="InterPro" id="IPR050220">
    <property type="entry name" value="Type_II_DNA_Topoisomerases"/>
</dbReference>
<dbReference type="NCBIfam" id="TIGR01063">
    <property type="entry name" value="gyrA"/>
    <property type="match status" value="1"/>
</dbReference>
<dbReference type="NCBIfam" id="NF004043">
    <property type="entry name" value="PRK05560.1"/>
    <property type="match status" value="1"/>
</dbReference>
<dbReference type="NCBIfam" id="NF004044">
    <property type="entry name" value="PRK05561.1"/>
    <property type="match status" value="1"/>
</dbReference>
<dbReference type="PANTHER" id="PTHR43493:SF5">
    <property type="entry name" value="DNA GYRASE SUBUNIT A, CHLOROPLASTIC_MITOCHONDRIAL"/>
    <property type="match status" value="1"/>
</dbReference>
<dbReference type="PANTHER" id="PTHR43493">
    <property type="entry name" value="DNA GYRASE/TOPOISOMERASE SUBUNIT A"/>
    <property type="match status" value="1"/>
</dbReference>
<dbReference type="Pfam" id="PF03989">
    <property type="entry name" value="DNA_gyraseA_C"/>
    <property type="match status" value="6"/>
</dbReference>
<dbReference type="Pfam" id="PF00521">
    <property type="entry name" value="DNA_topoisoIV"/>
    <property type="match status" value="1"/>
</dbReference>
<dbReference type="SMART" id="SM00434">
    <property type="entry name" value="TOP4c"/>
    <property type="match status" value="1"/>
</dbReference>
<dbReference type="SUPFAM" id="SSF101904">
    <property type="entry name" value="GyrA/ParC C-terminal domain-like"/>
    <property type="match status" value="1"/>
</dbReference>
<dbReference type="SUPFAM" id="SSF56719">
    <property type="entry name" value="Type II DNA topoisomerase"/>
    <property type="match status" value="1"/>
</dbReference>
<dbReference type="PROSITE" id="PS52040">
    <property type="entry name" value="TOPO_IIA"/>
    <property type="match status" value="1"/>
</dbReference>
<feature type="chain" id="PRO_0000145223" description="DNA gyrase subunit A">
    <location>
        <begin position="1"/>
        <end position="830"/>
    </location>
</feature>
<feature type="domain" description="Topo IIA-type catalytic" evidence="2">
    <location>
        <begin position="34"/>
        <end position="514"/>
    </location>
</feature>
<feature type="short sequence motif" description="GyrA-box" evidence="1">
    <location>
        <begin position="541"/>
        <end position="547"/>
    </location>
</feature>
<feature type="active site" description="O-(5'-phospho-DNA)-tyrosine intermediate" evidence="1">
    <location>
        <position position="122"/>
    </location>
</feature>
<keyword id="KW-0067">ATP-binding</keyword>
<keyword id="KW-0963">Cytoplasm</keyword>
<keyword id="KW-0238">DNA-binding</keyword>
<keyword id="KW-0413">Isomerase</keyword>
<keyword id="KW-0547">Nucleotide-binding</keyword>
<keyword id="KW-1185">Reference proteome</keyword>
<keyword id="KW-0799">Topoisomerase</keyword>